<accession>B2VL81</accession>
<protein>
    <recommendedName>
        <fullName evidence="1">Elongation factor P</fullName>
        <shortName evidence="1">EF-P</shortName>
    </recommendedName>
</protein>
<organism>
    <name type="scientific">Erwinia tasmaniensis (strain DSM 17950 / CFBP 7177 / CIP 109463 / NCPPB 4357 / Et1/99)</name>
    <dbReference type="NCBI Taxonomy" id="465817"/>
    <lineage>
        <taxon>Bacteria</taxon>
        <taxon>Pseudomonadati</taxon>
        <taxon>Pseudomonadota</taxon>
        <taxon>Gammaproteobacteria</taxon>
        <taxon>Enterobacterales</taxon>
        <taxon>Erwiniaceae</taxon>
        <taxon>Erwinia</taxon>
    </lineage>
</organism>
<proteinExistence type="inferred from homology"/>
<comment type="function">
    <text evidence="1">Involved in peptide bond synthesis. Alleviates ribosome stalling that occurs when 3 or more consecutive Pro residues or the sequence PPG is present in a protein, possibly by augmenting the peptidyl transferase activity of the ribosome. Modification of Lys-34 is required for alleviation.</text>
</comment>
<comment type="pathway">
    <text evidence="1">Protein biosynthesis; polypeptide chain elongation.</text>
</comment>
<comment type="subcellular location">
    <subcellularLocation>
        <location evidence="1">Cytoplasm</location>
    </subcellularLocation>
</comment>
<comment type="PTM">
    <text evidence="1">May be beta-lysylated on the epsilon-amino group of Lys-34 by the combined action of EpmA and EpmB, and then hydroxylated on the C5 position of the same residue by EpmC (if this protein is present). Lysylation is critical for the stimulatory effect of EF-P on peptide-bond formation. The lysylation moiety may extend toward the peptidyltransferase center and stabilize the terminal 3-CCA end of the tRNA. Hydroxylation of the C5 position on Lys-34 may allow additional potential stabilizing hydrogen-bond interactions with the P-tRNA.</text>
</comment>
<comment type="similarity">
    <text evidence="1">Belongs to the elongation factor P family.</text>
</comment>
<feature type="chain" id="PRO_1000096154" description="Elongation factor P">
    <location>
        <begin position="1"/>
        <end position="188"/>
    </location>
</feature>
<feature type="modified residue" description="N6-(3,6-diaminohexanoyl)-5-hydroxylysine" evidence="1">
    <location>
        <position position="34"/>
    </location>
</feature>
<sequence length="188" mass="20679">MATYSSNDFRPGLKIMFEGEPYAIESSEFVKPGKGQAFARVKMRRLLTGSRVEKTFKSTDSAEGADVVDTNLNYLYNDGDFYHFMHPETFEQHPVEAKTVGDAAKWLLDNAECIVTLWNGKPIQVLPPNFVELEITDTDPGLKGDTAGTGGKPATLSTGAVVKVPLFVQIGEVIKVDTRSAEYVSRVK</sequence>
<keyword id="KW-0963">Cytoplasm</keyword>
<keyword id="KW-0251">Elongation factor</keyword>
<keyword id="KW-0379">Hydroxylation</keyword>
<keyword id="KW-0648">Protein biosynthesis</keyword>
<keyword id="KW-1185">Reference proteome</keyword>
<dbReference type="EMBL" id="CU468135">
    <property type="protein sequence ID" value="CAO98026.1"/>
    <property type="molecule type" value="Genomic_DNA"/>
</dbReference>
<dbReference type="RefSeq" id="WP_012442678.1">
    <property type="nucleotide sequence ID" value="NC_010694.1"/>
</dbReference>
<dbReference type="SMR" id="B2VL81"/>
<dbReference type="STRING" id="465817.ETA_29800"/>
<dbReference type="KEGG" id="eta:ETA_29800"/>
<dbReference type="eggNOG" id="COG0231">
    <property type="taxonomic scope" value="Bacteria"/>
</dbReference>
<dbReference type="HOGENOM" id="CLU_074944_0_0_6"/>
<dbReference type="OrthoDB" id="9801844at2"/>
<dbReference type="UniPathway" id="UPA00345"/>
<dbReference type="Proteomes" id="UP000001726">
    <property type="component" value="Chromosome"/>
</dbReference>
<dbReference type="GO" id="GO:0005737">
    <property type="term" value="C:cytoplasm"/>
    <property type="evidence" value="ECO:0007669"/>
    <property type="project" value="UniProtKB-SubCell"/>
</dbReference>
<dbReference type="GO" id="GO:0003746">
    <property type="term" value="F:translation elongation factor activity"/>
    <property type="evidence" value="ECO:0007669"/>
    <property type="project" value="UniProtKB-UniRule"/>
</dbReference>
<dbReference type="GO" id="GO:0043043">
    <property type="term" value="P:peptide biosynthetic process"/>
    <property type="evidence" value="ECO:0007669"/>
    <property type="project" value="InterPro"/>
</dbReference>
<dbReference type="CDD" id="cd04470">
    <property type="entry name" value="S1_EF-P_repeat_1"/>
    <property type="match status" value="1"/>
</dbReference>
<dbReference type="CDD" id="cd05794">
    <property type="entry name" value="S1_EF-P_repeat_2"/>
    <property type="match status" value="1"/>
</dbReference>
<dbReference type="FunFam" id="2.30.30.30:FF:000003">
    <property type="entry name" value="Elongation factor P"/>
    <property type="match status" value="1"/>
</dbReference>
<dbReference type="FunFam" id="2.40.50.140:FF:000004">
    <property type="entry name" value="Elongation factor P"/>
    <property type="match status" value="1"/>
</dbReference>
<dbReference type="FunFam" id="2.40.50.140:FF:000009">
    <property type="entry name" value="Elongation factor P"/>
    <property type="match status" value="1"/>
</dbReference>
<dbReference type="Gene3D" id="2.30.30.30">
    <property type="match status" value="1"/>
</dbReference>
<dbReference type="Gene3D" id="2.40.50.140">
    <property type="entry name" value="Nucleic acid-binding proteins"/>
    <property type="match status" value="2"/>
</dbReference>
<dbReference type="HAMAP" id="MF_00141">
    <property type="entry name" value="EF_P"/>
    <property type="match status" value="1"/>
</dbReference>
<dbReference type="InterPro" id="IPR015365">
    <property type="entry name" value="Elong-fact-P_C"/>
</dbReference>
<dbReference type="InterPro" id="IPR012340">
    <property type="entry name" value="NA-bd_OB-fold"/>
</dbReference>
<dbReference type="InterPro" id="IPR014722">
    <property type="entry name" value="Rib_uL2_dom2"/>
</dbReference>
<dbReference type="InterPro" id="IPR020599">
    <property type="entry name" value="Transl_elong_fac_P/YeiP"/>
</dbReference>
<dbReference type="InterPro" id="IPR013185">
    <property type="entry name" value="Transl_elong_KOW-like"/>
</dbReference>
<dbReference type="InterPro" id="IPR001059">
    <property type="entry name" value="Transl_elong_P/YeiP_cen"/>
</dbReference>
<dbReference type="InterPro" id="IPR013852">
    <property type="entry name" value="Transl_elong_P/YeiP_CS"/>
</dbReference>
<dbReference type="InterPro" id="IPR011768">
    <property type="entry name" value="Transl_elongation_fac_P"/>
</dbReference>
<dbReference type="InterPro" id="IPR008991">
    <property type="entry name" value="Translation_prot_SH3-like_sf"/>
</dbReference>
<dbReference type="NCBIfam" id="TIGR00038">
    <property type="entry name" value="efp"/>
    <property type="match status" value="1"/>
</dbReference>
<dbReference type="NCBIfam" id="NF001810">
    <property type="entry name" value="PRK00529.1"/>
    <property type="match status" value="1"/>
</dbReference>
<dbReference type="PANTHER" id="PTHR30053">
    <property type="entry name" value="ELONGATION FACTOR P"/>
    <property type="match status" value="1"/>
</dbReference>
<dbReference type="PANTHER" id="PTHR30053:SF12">
    <property type="entry name" value="ELONGATION FACTOR P (EF-P) FAMILY PROTEIN"/>
    <property type="match status" value="1"/>
</dbReference>
<dbReference type="Pfam" id="PF01132">
    <property type="entry name" value="EFP"/>
    <property type="match status" value="1"/>
</dbReference>
<dbReference type="Pfam" id="PF08207">
    <property type="entry name" value="EFP_N"/>
    <property type="match status" value="1"/>
</dbReference>
<dbReference type="Pfam" id="PF09285">
    <property type="entry name" value="Elong-fact-P_C"/>
    <property type="match status" value="1"/>
</dbReference>
<dbReference type="PIRSF" id="PIRSF005901">
    <property type="entry name" value="EF-P"/>
    <property type="match status" value="1"/>
</dbReference>
<dbReference type="SMART" id="SM01185">
    <property type="entry name" value="EFP"/>
    <property type="match status" value="1"/>
</dbReference>
<dbReference type="SMART" id="SM00841">
    <property type="entry name" value="Elong-fact-P_C"/>
    <property type="match status" value="1"/>
</dbReference>
<dbReference type="SUPFAM" id="SSF50249">
    <property type="entry name" value="Nucleic acid-binding proteins"/>
    <property type="match status" value="2"/>
</dbReference>
<dbReference type="SUPFAM" id="SSF50104">
    <property type="entry name" value="Translation proteins SH3-like domain"/>
    <property type="match status" value="1"/>
</dbReference>
<dbReference type="PROSITE" id="PS01275">
    <property type="entry name" value="EFP"/>
    <property type="match status" value="1"/>
</dbReference>
<evidence type="ECO:0000255" key="1">
    <source>
        <dbReference type="HAMAP-Rule" id="MF_00141"/>
    </source>
</evidence>
<name>EFP_ERWT9</name>
<gene>
    <name evidence="1" type="primary">efp</name>
    <name type="ordered locus">ETA_29800</name>
</gene>
<reference key="1">
    <citation type="journal article" date="2008" name="Environ. Microbiol.">
        <title>The genome of Erwinia tasmaniensis strain Et1/99, a non-pathogenic bacterium in the genus Erwinia.</title>
        <authorList>
            <person name="Kube M."/>
            <person name="Migdoll A.M."/>
            <person name="Mueller I."/>
            <person name="Kuhl H."/>
            <person name="Beck A."/>
            <person name="Reinhardt R."/>
            <person name="Geider K."/>
        </authorList>
    </citation>
    <scope>NUCLEOTIDE SEQUENCE [LARGE SCALE GENOMIC DNA]</scope>
    <source>
        <strain>DSM 17950 / CFBP 7177 / CIP 109463 / NCPPB 4357 / Et1/99</strain>
    </source>
</reference>